<feature type="chain" id="PRO_0000133172" description="Regulatory protein E2">
    <location>
        <begin position="1"/>
        <end position="410"/>
    </location>
</feature>
<feature type="region of interest" description="Transactivation domain" evidence="1">
    <location>
        <begin position="1"/>
        <end position="202"/>
    </location>
</feature>
<feature type="region of interest" description="Disordered" evidence="2">
    <location>
        <begin position="198"/>
        <end position="239"/>
    </location>
</feature>
<feature type="region of interest" description="Disordered" evidence="2">
    <location>
        <begin position="263"/>
        <end position="282"/>
    </location>
</feature>
<feature type="region of interest" description="Disordered" evidence="2">
    <location>
        <begin position="289"/>
        <end position="314"/>
    </location>
</feature>
<feature type="region of interest" description="DNA-binding domain" evidence="1 6">
    <location>
        <begin position="325"/>
        <end position="410"/>
    </location>
</feature>
<feature type="compositionally biased region" description="Acidic residues" evidence="2">
    <location>
        <begin position="293"/>
        <end position="306"/>
    </location>
</feature>
<feature type="modified residue" description="Phosphoserine; by host" evidence="5">
    <location>
        <position position="298"/>
    </location>
</feature>
<feature type="modified residue" description="Phosphoserine; by host" evidence="5">
    <location>
        <position position="301"/>
    </location>
</feature>
<feature type="mutagenesis site" description="Loss of ability to bind to DDX11, no effect on ability to bind BRD4, loss of attachment to mitotic chromosomes, and interference with the maintenance of replicating viral episomes." evidence="4">
    <original>W</original>
    <variation>R</variation>
    <location>
        <position position="130"/>
    </location>
</feature>
<feature type="mutagenesis site" description="90% decrease in DNA-binding affinity." evidence="3">
    <original>C</original>
    <variation>A</variation>
    <location>
        <position position="340"/>
    </location>
</feature>
<feature type="mutagenesis site" description="&lt;50% decrease in DNA-binding affinity." evidence="3">
    <original>C</original>
    <variation>G</variation>
    <location>
        <position position="340"/>
    </location>
</feature>
<feature type="mutagenesis site" description="50% decrease in DNA-binding affinity." evidence="3">
    <original>C</original>
    <variation>S</variation>
    <location>
        <position position="340"/>
    </location>
</feature>
<feature type="helix" evidence="9">
    <location>
        <begin position="4"/>
        <end position="21"/>
    </location>
</feature>
<feature type="helix" evidence="9">
    <location>
        <begin position="26"/>
        <end position="48"/>
    </location>
</feature>
<feature type="strand" evidence="9">
    <location>
        <begin position="52"/>
        <end position="54"/>
    </location>
</feature>
<feature type="helix" evidence="9">
    <location>
        <begin position="62"/>
        <end position="83"/>
    </location>
</feature>
<feature type="helix" evidence="9">
    <location>
        <begin position="86"/>
        <end position="89"/>
    </location>
</feature>
<feature type="turn" evidence="9">
    <location>
        <begin position="94"/>
        <end position="97"/>
    </location>
</feature>
<feature type="helix" evidence="9">
    <location>
        <begin position="99"/>
        <end position="103"/>
    </location>
</feature>
<feature type="strand" evidence="9">
    <location>
        <begin position="104"/>
        <end position="120"/>
    </location>
</feature>
<feature type="strand" evidence="9">
    <location>
        <begin position="127"/>
        <end position="140"/>
    </location>
</feature>
<feature type="strand" evidence="9">
    <location>
        <begin position="142"/>
        <end position="152"/>
    </location>
</feature>
<feature type="strand" evidence="9">
    <location>
        <begin position="157"/>
        <end position="161"/>
    </location>
</feature>
<feature type="turn" evidence="9">
    <location>
        <begin position="162"/>
        <end position="165"/>
    </location>
</feature>
<feature type="strand" evidence="9">
    <location>
        <begin position="166"/>
        <end position="170"/>
    </location>
</feature>
<feature type="helix" evidence="9">
    <location>
        <begin position="173"/>
        <end position="180"/>
    </location>
</feature>
<feature type="strand" evidence="9">
    <location>
        <begin position="182"/>
        <end position="184"/>
    </location>
</feature>
<feature type="strand" evidence="9">
    <location>
        <begin position="186"/>
        <end position="192"/>
    </location>
</feature>
<feature type="strand" evidence="9">
    <location>
        <begin position="194"/>
        <end position="197"/>
    </location>
</feature>
<feature type="strand" evidence="8">
    <location>
        <begin position="327"/>
        <end position="333"/>
    </location>
</feature>
<feature type="helix" evidence="8">
    <location>
        <begin position="335"/>
        <end position="348"/>
    </location>
</feature>
<feature type="helix" evidence="8">
    <location>
        <begin position="350"/>
        <end position="352"/>
    </location>
</feature>
<feature type="strand" evidence="8">
    <location>
        <begin position="354"/>
        <end position="356"/>
    </location>
</feature>
<feature type="strand" evidence="8">
    <location>
        <begin position="360"/>
        <end position="363"/>
    </location>
</feature>
<feature type="strand" evidence="10">
    <location>
        <begin position="365"/>
        <end position="367"/>
    </location>
</feature>
<feature type="strand" evidence="8">
    <location>
        <begin position="370"/>
        <end position="382"/>
    </location>
</feature>
<feature type="helix" evidence="8">
    <location>
        <begin position="383"/>
        <end position="392"/>
    </location>
</feature>
<feature type="strand" evidence="8">
    <location>
        <begin position="400"/>
        <end position="405"/>
    </location>
</feature>
<evidence type="ECO:0000255" key="1">
    <source>
        <dbReference type="HAMAP-Rule" id="MF_04001"/>
    </source>
</evidence>
<evidence type="ECO:0000256" key="2">
    <source>
        <dbReference type="SAM" id="MobiDB-lite"/>
    </source>
</evidence>
<evidence type="ECO:0000269" key="3">
    <source>
    </source>
</evidence>
<evidence type="ECO:0000269" key="4">
    <source>
    </source>
</evidence>
<evidence type="ECO:0000269" key="5">
    <source>
    </source>
</evidence>
<evidence type="ECO:0000269" key="6">
    <source>
    </source>
</evidence>
<evidence type="ECO:0000305" key="7"/>
<evidence type="ECO:0007829" key="8">
    <source>
        <dbReference type="PDB" id="2BOP"/>
    </source>
</evidence>
<evidence type="ECO:0007829" key="9">
    <source>
        <dbReference type="PDB" id="2JEX"/>
    </source>
</evidence>
<evidence type="ECO:0007829" key="10">
    <source>
        <dbReference type="PDB" id="6BUS"/>
    </source>
</evidence>
<reference key="1">
    <citation type="journal article" date="1982" name="Nature">
        <title>The primary structure and genetic organization of the bovine papillomavirus type 1 genome.</title>
        <authorList>
            <person name="Chen E.Y."/>
            <person name="Howley P.M."/>
            <person name="Levinson A.D."/>
            <person name="Seeburg P.H."/>
        </authorList>
    </citation>
    <scope>NUCLEOTIDE SEQUENCE [GENOMIC DNA]</scope>
</reference>
<reference key="2">
    <citation type="journal article" date="1988" name="EMBO J.">
        <title>The carboxy-terminal domain shared by the bovine papillomavirus E2 transactivator and repressor proteins contains a specific DNA binding activity.</title>
        <authorList>
            <person name="McBride A.A."/>
            <person name="Schlegel R."/>
            <person name="Howley P.M."/>
        </authorList>
    </citation>
    <scope>DNA-BINDING REGION</scope>
</reference>
<reference key="3">
    <citation type="journal article" date="1989" name="J. Virol.">
        <title>Phosphorylation sites of the E2 transcriptional regulatory proteins of bovine papillomavirus type 1.</title>
        <authorList>
            <person name="McBride A.A."/>
            <person name="Bolen J.B."/>
            <person name="Howley P.M."/>
        </authorList>
    </citation>
    <scope>PHOSPHORYLATION AT SER-298 AND SER-301</scope>
</reference>
<reference key="4">
    <citation type="journal article" date="1991" name="EMBO J.">
        <title>Transient replication of BPV-1 requires two viral polypeptides encoded by the E1 and E2 open reading frames.</title>
        <authorList>
            <person name="Ustav M."/>
            <person name="Stenlung A."/>
        </authorList>
    </citation>
    <scope>REQUIREMENT FOR REPLICATION</scope>
</reference>
<reference key="5">
    <citation type="journal article" date="1992" name="Proc. Natl. Acad. Sci. U.S.A.">
        <title>Conserved cysteine residue in the DNA-binding domain of the bovine papillomavirus type 1 E2 protein confers redox regulation of the DNA-binding activity in vitro.</title>
        <authorList>
            <person name="McBride A.A."/>
            <person name="Klausner R.D."/>
            <person name="Howley P.M."/>
        </authorList>
    </citation>
    <scope>REDOX REGULATION</scope>
    <scope>MUTAGENESIS OF CYS-340</scope>
</reference>
<reference key="6">
    <citation type="journal article" date="2006" name="Mol. Cell">
        <title>ChlR1 is required for loading papillomavirus E2 onto mitotic chromosomes and viral genome maintenance.</title>
        <authorList>
            <person name="Parish J.L."/>
            <person name="Bean A.M."/>
            <person name="Park R.B."/>
            <person name="Androphy E.J."/>
        </authorList>
    </citation>
    <scope>SUBCELLULAR LOCATION</scope>
    <scope>INTERACTION WITH DDX11 AND BRD4</scope>
    <scope>MUTAGENESIS OF TRP-130</scope>
</reference>
<reference key="7">
    <citation type="journal article" date="1992" name="Nature">
        <title>Crystal structure at 1.7 A of the bovine papillomavirus-1 E2 DNA-binding domain bound to its DNA target.</title>
        <authorList>
            <person name="Hegde R.S."/>
            <person name="Grossman S.R."/>
            <person name="Laimins L.A."/>
            <person name="Sigler P.B."/>
        </authorList>
    </citation>
    <scope>X-RAY CRYSTALLOGRAPHY (1.7 ANGSTROMS) OF 326-410</scope>
</reference>
<accession>P03122</accession>
<accession>Q9WMH0</accession>
<keyword id="KW-0002">3D-structure</keyword>
<keyword id="KW-0010">Activator</keyword>
<keyword id="KW-0235">DNA replication</keyword>
<keyword id="KW-0238">DNA-binding</keyword>
<keyword id="KW-0244">Early protein</keyword>
<keyword id="KW-1048">Host nucleus</keyword>
<keyword id="KW-0558">Oxidation</keyword>
<keyword id="KW-0597">Phosphoprotein</keyword>
<keyword id="KW-1185">Reference proteome</keyword>
<keyword id="KW-0678">Repressor</keyword>
<keyword id="KW-0804">Transcription</keyword>
<keyword id="KW-0805">Transcription regulation</keyword>
<name>VE2_BPV1</name>
<sequence length="410" mass="45450">METACERLHVAQETQMQLIEKSSDKLQDHILYWTAVRTENTLLYAARKKGVTVLGHCRVPHSVVCQERAKQAIEMQLSLQELSKTEFGDEPWSLLDTSWDRYMSEPKRCFKKGARVVEVEFDGNASNTNWYTVYSNLYMRTEDGWQLAKAGADGTGLYYCTMAGAGRIYYSRFGDEAARFSTTGHYSVRDQDRVYAGVSSTSSDFRDRPDGVWVASEGPEGDPAGKEAEPAQPVSSLLGSPACGPIRAGLGWVRDGPRSHPYNFPAGSGGSILRSSSTPVQGTVPVDLASRQEEEEQSPDSTEEEPVTLPRRTTNDGFHLLKAGGSCFALISGTANQVKCYRFRVKKNHRHRYENCTTTWFTVADNGAERQGQAQILITFGSPSQRQDFLKHVPLPPGMNISGFTASLDF</sequence>
<dbReference type="EMBL" id="X02346">
    <property type="protein sequence ID" value="CAB46512.1"/>
    <property type="status" value="ALT_FRAME"/>
    <property type="molecule type" value="Genomic_DNA"/>
</dbReference>
<dbReference type="PIR" id="A03672">
    <property type="entry name" value="W2WLEB"/>
</dbReference>
<dbReference type="RefSeq" id="NP_056740.1">
    <property type="nucleotide sequence ID" value="NC_001522.1"/>
</dbReference>
<dbReference type="PDB" id="1DBD">
    <property type="method" value="NMR"/>
    <property type="chains" value="A/B=311-410"/>
</dbReference>
<dbReference type="PDB" id="1JJH">
    <property type="method" value="X-ray"/>
    <property type="resolution" value="2.50 A"/>
    <property type="chains" value="A/B/C=326-410"/>
</dbReference>
<dbReference type="PDB" id="2BOP">
    <property type="method" value="X-ray"/>
    <property type="resolution" value="1.70 A"/>
    <property type="chains" value="A=326-410"/>
</dbReference>
<dbReference type="PDB" id="2JEU">
    <property type="method" value="X-ray"/>
    <property type="resolution" value="2.80 A"/>
    <property type="chains" value="A=1-209"/>
</dbReference>
<dbReference type="PDB" id="2JEX">
    <property type="method" value="X-ray"/>
    <property type="resolution" value="2.35 A"/>
    <property type="chains" value="A=1-209"/>
</dbReference>
<dbReference type="PDB" id="6BUS">
    <property type="method" value="X-ray"/>
    <property type="resolution" value="1.90 A"/>
    <property type="chains" value="1/2/3/4=310-410"/>
</dbReference>
<dbReference type="PDBsum" id="1DBD"/>
<dbReference type="PDBsum" id="1JJH"/>
<dbReference type="PDBsum" id="2BOP"/>
<dbReference type="PDBsum" id="2JEU"/>
<dbReference type="PDBsum" id="2JEX"/>
<dbReference type="PDBsum" id="6BUS"/>
<dbReference type="BMRB" id="P03122"/>
<dbReference type="SMR" id="P03122"/>
<dbReference type="DIP" id="DIP-40866N"/>
<dbReference type="IntAct" id="P03122">
    <property type="interactions" value="8"/>
</dbReference>
<dbReference type="MINT" id="P03122"/>
<dbReference type="iPTMnet" id="P03122"/>
<dbReference type="DNASU" id="1489020"/>
<dbReference type="GeneID" id="1489020"/>
<dbReference type="KEGG" id="vg:1489020"/>
<dbReference type="OrthoDB" id="15886at10239"/>
<dbReference type="EvolutionaryTrace" id="P03122"/>
<dbReference type="Proteomes" id="UP000006567">
    <property type="component" value="Genome"/>
</dbReference>
<dbReference type="GO" id="GO:0042025">
    <property type="term" value="C:host cell nucleus"/>
    <property type="evidence" value="ECO:0007669"/>
    <property type="project" value="UniProtKB-SubCell"/>
</dbReference>
<dbReference type="GO" id="GO:0003677">
    <property type="term" value="F:DNA binding"/>
    <property type="evidence" value="ECO:0007669"/>
    <property type="project" value="UniProtKB-UniRule"/>
</dbReference>
<dbReference type="GO" id="GO:0003700">
    <property type="term" value="F:DNA-binding transcription factor activity"/>
    <property type="evidence" value="ECO:0007669"/>
    <property type="project" value="UniProtKB-UniRule"/>
</dbReference>
<dbReference type="GO" id="GO:0000166">
    <property type="term" value="F:nucleotide binding"/>
    <property type="evidence" value="ECO:0007669"/>
    <property type="project" value="UniProtKB-UniRule"/>
</dbReference>
<dbReference type="GO" id="GO:0006260">
    <property type="term" value="P:DNA replication"/>
    <property type="evidence" value="ECO:0007669"/>
    <property type="project" value="UniProtKB-KW"/>
</dbReference>
<dbReference type="GO" id="GO:0006351">
    <property type="term" value="P:DNA-templated transcription"/>
    <property type="evidence" value="ECO:0007669"/>
    <property type="project" value="UniProtKB-UniRule"/>
</dbReference>
<dbReference type="GO" id="GO:0006275">
    <property type="term" value="P:regulation of DNA replication"/>
    <property type="evidence" value="ECO:0007669"/>
    <property type="project" value="UniProtKB-UniRule"/>
</dbReference>
<dbReference type="GO" id="GO:0039693">
    <property type="term" value="P:viral DNA genome replication"/>
    <property type="evidence" value="ECO:0000314"/>
    <property type="project" value="UniProtKB"/>
</dbReference>
<dbReference type="FunFam" id="2.170.200.10:FF:000002">
    <property type="entry name" value="Regulatory protein E2"/>
    <property type="match status" value="1"/>
</dbReference>
<dbReference type="Gene3D" id="3.30.70.330">
    <property type="match status" value="1"/>
</dbReference>
<dbReference type="Gene3D" id="1.10.287.30">
    <property type="entry name" value="E2 (early) protein, N terminal domain, subdomain 1"/>
    <property type="match status" value="1"/>
</dbReference>
<dbReference type="Gene3D" id="2.170.200.10">
    <property type="entry name" value="Papillomavirus E2 early protein domain"/>
    <property type="match status" value="1"/>
</dbReference>
<dbReference type="HAMAP" id="MF_04001">
    <property type="entry name" value="PPV_E2"/>
    <property type="match status" value="1"/>
</dbReference>
<dbReference type="InterPro" id="IPR035975">
    <property type="entry name" value="E2/EBNA1_C_sf"/>
</dbReference>
<dbReference type="InterPro" id="IPR012677">
    <property type="entry name" value="Nucleotide-bd_a/b_plait_sf"/>
</dbReference>
<dbReference type="InterPro" id="IPR000427">
    <property type="entry name" value="Papillomavirus_E2_C"/>
</dbReference>
<dbReference type="InterPro" id="IPR001866">
    <property type="entry name" value="PPV_E2_N"/>
</dbReference>
<dbReference type="InterPro" id="IPR033668">
    <property type="entry name" value="Reg_prot_E2"/>
</dbReference>
<dbReference type="InterPro" id="IPR036050">
    <property type="entry name" value="Regulatory_protein_E2_N"/>
</dbReference>
<dbReference type="InterPro" id="IPR042503">
    <property type="entry name" value="Regulatory_protein_E2_N_1"/>
</dbReference>
<dbReference type="InterPro" id="IPR042504">
    <property type="entry name" value="Regulatory_protein_E2_N_2"/>
</dbReference>
<dbReference type="Pfam" id="PF00511">
    <property type="entry name" value="PPV_E2_C"/>
    <property type="match status" value="1"/>
</dbReference>
<dbReference type="Pfam" id="PF00508">
    <property type="entry name" value="PPV_E2_N"/>
    <property type="match status" value="1"/>
</dbReference>
<dbReference type="SUPFAM" id="SSF51332">
    <property type="entry name" value="E2 regulatory, transactivation domain"/>
    <property type="match status" value="1"/>
</dbReference>
<dbReference type="SUPFAM" id="SSF54957">
    <property type="entry name" value="Viral DNA-binding domain"/>
    <property type="match status" value="1"/>
</dbReference>
<organismHost>
    <name type="scientific">Bos taurus</name>
    <name type="common">Bovine</name>
    <dbReference type="NCBI Taxonomy" id="9913"/>
</organismHost>
<comment type="function">
    <text evidence="1">Plays a role in the initiation of viral DNA replication. A dimer of E2 interacts with a dimer of E1 in order to improve specificity of E1 DNA binding activity. Once the complex recognizes and binds DNA at specific sites, the E2 dimer is removed from DNA. E2 also regulates viral transcription through binding to the E2RE response element (5'-ACCNNNNNNGGT-3') present in multiple copies in the regulatory regions of the viral genome. Activates or represses transcription depending on E2RE's position with regards to proximal promoter elements including the TATA-box. Repression occurs by sterically hindering the assembly of the transcription initiation complex.</text>
</comment>
<comment type="activity regulation">
    <text>Inactivated by oxidation of Cys-340 to a sulfenic acid.</text>
</comment>
<comment type="subunit">
    <text evidence="1 4">Binds DNA as homodimer. Interacts with protein E1; this interaction greatly increases E1 DNA-binding activity. Interacts with protein L1; this interaction enhances E2-dependent replication and transcription activation. Interacts with protein L2; this interaction inhibits E2 transcriptional activity but not DNA replication function E2. Interacts with protein E7; this interaction inhibits E7 oncogenic activity. Interacts with host TAF1; this interaction modulates E2-dependent transcriptional regulation. Interacts with host BRD4; this interaction mediates E2 transcriptional activation function. Additionally, the interaction with host BRD4 on mitotic chromosomes mediates tethering of the viral genome. Interacts with host TOPBP1; this interaction is required for optimal viral DNA replication. Interacts with human DDX11.</text>
</comment>
<comment type="interaction">
    <interactant intactId="EBI-7028618">
        <id>P03122</id>
    </interactant>
    <interactant intactId="EBI-9345088">
        <id>O60885-1</id>
        <label>BRD4</label>
    </interactant>
    <organismsDiffer>true</organismsDiffer>
    <experiments>2</experiments>
</comment>
<comment type="interaction">
    <interactant intactId="EBI-7028618">
        <id>P03122</id>
    </interactant>
    <interactant intactId="EBI-1172054">
        <id>P49715</id>
        <label>CEBPA</label>
    </interactant>
    <organismsDiffer>true</organismsDiffer>
    <experiments>2</experiments>
</comment>
<comment type="interaction">
    <interactant intactId="EBI-7028618">
        <id>P03122</id>
    </interactant>
    <interactant intactId="EBI-969696">
        <id>P17676</id>
        <label>CEBPB</label>
    </interactant>
    <organismsDiffer>true</organismsDiffer>
    <experiments>3</experiments>
</comment>
<comment type="interaction">
    <interactant intactId="EBI-7028618">
        <id>P03122</id>
    </interactant>
    <interactant intactId="EBI-447295">
        <id>Q09472</id>
        <label>EP300</label>
    </interactant>
    <organismsDiffer>true</organismsDiffer>
    <experiments>3</experiments>
</comment>
<comment type="interaction">
    <interactant intactId="EBI-7028618">
        <id>P03122</id>
    </interactant>
    <interactant intactId="EBI-1246541">
        <id>P41229</id>
        <label>KDM5C</label>
    </interactant>
    <organismsDiffer>true</organismsDiffer>
    <experiments>2</experiments>
</comment>
<comment type="subcellular location">
    <subcellularLocation>
        <location evidence="1 4">Host nucleus</location>
    </subcellularLocation>
    <text>Colocalizes with DDX11 at early stages of mitosis.</text>
</comment>
<comment type="PTM">
    <text evidence="3">Oxidation of Cys-340 in response to redox signaling leads to the loss of DNA-binding activity and the inactivation of gene activator or repressor function.</text>
</comment>
<comment type="PTM">
    <text evidence="1">Phosphorylated.</text>
</comment>
<comment type="similarity">
    <text evidence="1">Belongs to the papillomaviridae E2 protein family.</text>
</comment>
<comment type="sequence caution" evidence="7">
    <conflict type="frameshift">
        <sequence resource="EMBL-CDS" id="CAB46512"/>
    </conflict>
</comment>
<protein>
    <recommendedName>
        <fullName evidence="1">Regulatory protein E2</fullName>
    </recommendedName>
</protein>
<organism>
    <name type="scientific">Bovine papillomavirus type 1</name>
    <dbReference type="NCBI Taxonomy" id="337052"/>
    <lineage>
        <taxon>Viruses</taxon>
        <taxon>Monodnaviria</taxon>
        <taxon>Shotokuvirae</taxon>
        <taxon>Cossaviricota</taxon>
        <taxon>Papovaviricetes</taxon>
        <taxon>Zurhausenvirales</taxon>
        <taxon>Papillomaviridae</taxon>
        <taxon>Firstpapillomavirinae</taxon>
        <taxon>Deltapapillomavirus</taxon>
    </lineage>
</organism>
<gene>
    <name evidence="1" type="primary">E2</name>
</gene>
<proteinExistence type="evidence at protein level"/>